<dbReference type="EMBL" id="AF078834">
    <property type="protein sequence ID" value="AAG12173.1"/>
    <property type="molecule type" value="mRNA"/>
</dbReference>
<dbReference type="EMBL" id="AK048800">
    <property type="protein sequence ID" value="BAC33461.1"/>
    <property type="molecule type" value="mRNA"/>
</dbReference>
<dbReference type="EMBL" id="AK083144">
    <property type="protein sequence ID" value="BAC38783.1"/>
    <property type="molecule type" value="mRNA"/>
</dbReference>
<dbReference type="EMBL" id="AC107236">
    <property type="status" value="NOT_ANNOTATED_CDS"/>
    <property type="molecule type" value="Genomic_DNA"/>
</dbReference>
<dbReference type="EMBL" id="CH466554">
    <property type="protein sequence ID" value="EDL35605.1"/>
    <property type="molecule type" value="Genomic_DNA"/>
</dbReference>
<dbReference type="EMBL" id="BC096433">
    <property type="protein sequence ID" value="AAH96433.1"/>
    <property type="molecule type" value="mRNA"/>
</dbReference>
<dbReference type="EMBL" id="BC138229">
    <property type="protein sequence ID" value="AAI38230.1"/>
    <property type="molecule type" value="mRNA"/>
</dbReference>
<dbReference type="EMBL" id="BC050003">
    <property type="protein sequence ID" value="AAH50003.1"/>
    <property type="status" value="ALT_SEQ"/>
    <property type="molecule type" value="mRNA"/>
</dbReference>
<dbReference type="CCDS" id="CCDS22298.1"/>
<dbReference type="RefSeq" id="NP_075992.2">
    <property type="nucleotide sequence ID" value="NM_023503.3"/>
</dbReference>
<dbReference type="PDB" id="1WES">
    <property type="method" value="NMR"/>
    <property type="chains" value="A=205-262"/>
</dbReference>
<dbReference type="PDB" id="2G6Q">
    <property type="method" value="X-ray"/>
    <property type="resolution" value="2.00 A"/>
    <property type="chains" value="A=205-264"/>
</dbReference>
<dbReference type="PDBsum" id="1WES"/>
<dbReference type="PDBsum" id="2G6Q"/>
<dbReference type="SMR" id="Q9ESK4"/>
<dbReference type="BioGRID" id="213322">
    <property type="interactions" value="3"/>
</dbReference>
<dbReference type="ComplexPortal" id="CPX-3441">
    <property type="entry name" value="SIN3A histone deacetylase complex, ES cell-specific variant"/>
</dbReference>
<dbReference type="ComplexPortal" id="CPX-3443">
    <property type="entry name" value="SIN3A histone deacetylase complex"/>
</dbReference>
<dbReference type="ComplexPortal" id="CPX-3444">
    <property type="entry name" value="SIN3B histone deacetylase complex"/>
</dbReference>
<dbReference type="DIP" id="DIP-38912N"/>
<dbReference type="FunCoup" id="Q9ESK4">
    <property type="interactions" value="2968"/>
</dbReference>
<dbReference type="MINT" id="Q9ESK4"/>
<dbReference type="STRING" id="10090.ENSMUSP00000079226"/>
<dbReference type="PhosphoSitePlus" id="Q9ESK4"/>
<dbReference type="PaxDb" id="10090-ENSMUSP00000079226"/>
<dbReference type="PeptideAtlas" id="Q9ESK4"/>
<dbReference type="ProteomicsDB" id="267137"/>
<dbReference type="Pumba" id="Q9ESK4"/>
<dbReference type="Antibodypedia" id="17300">
    <property type="antibodies" value="323 antibodies from 32 providers"/>
</dbReference>
<dbReference type="DNASU" id="69260"/>
<dbReference type="Ensembl" id="ENSMUST00000080353.3">
    <property type="protein sequence ID" value="ENSMUSP00000079226.3"/>
    <property type="gene ID" value="ENSMUSG00000063049.5"/>
</dbReference>
<dbReference type="GeneID" id="69260"/>
<dbReference type="KEGG" id="mmu:69260"/>
<dbReference type="UCSC" id="uc009lrf.2">
    <property type="organism name" value="mouse"/>
</dbReference>
<dbReference type="AGR" id="MGI:1916510"/>
<dbReference type="CTD" id="3622"/>
<dbReference type="MGI" id="MGI:1916510">
    <property type="gene designation" value="Ing2"/>
</dbReference>
<dbReference type="VEuPathDB" id="HostDB:ENSMUSG00000063049"/>
<dbReference type="eggNOG" id="KOG1973">
    <property type="taxonomic scope" value="Eukaryota"/>
</dbReference>
<dbReference type="GeneTree" id="ENSGT00940000158194"/>
<dbReference type="InParanoid" id="Q9ESK4"/>
<dbReference type="OMA" id="QCFQDPS"/>
<dbReference type="OrthoDB" id="5411773at2759"/>
<dbReference type="PhylomeDB" id="Q9ESK4"/>
<dbReference type="TreeFam" id="TF352014"/>
<dbReference type="Reactome" id="R-MMU-3899300">
    <property type="pathway name" value="SUMOylation of transcription cofactors"/>
</dbReference>
<dbReference type="Reactome" id="R-MMU-6811555">
    <property type="pathway name" value="PI5P Regulates TP53 Acetylation"/>
</dbReference>
<dbReference type="BioGRID-ORCS" id="69260">
    <property type="hits" value="12 hits in 81 CRISPR screens"/>
</dbReference>
<dbReference type="EvolutionaryTrace" id="Q9ESK4"/>
<dbReference type="PRO" id="PR:Q9ESK4"/>
<dbReference type="Proteomes" id="UP000000589">
    <property type="component" value="Chromosome 8"/>
</dbReference>
<dbReference type="RNAct" id="Q9ESK4">
    <property type="molecule type" value="protein"/>
</dbReference>
<dbReference type="Bgee" id="ENSMUSG00000063049">
    <property type="expression patterns" value="Expressed in lens of camera-type eye and 255 other cell types or tissues"/>
</dbReference>
<dbReference type="GO" id="GO:0016602">
    <property type="term" value="C:CCAAT-binding factor complex"/>
    <property type="evidence" value="ECO:0007669"/>
    <property type="project" value="Ensembl"/>
</dbReference>
<dbReference type="GO" id="GO:0005634">
    <property type="term" value="C:nucleus"/>
    <property type="evidence" value="ECO:0000303"/>
    <property type="project" value="ComplexPortal"/>
</dbReference>
<dbReference type="GO" id="GO:0005886">
    <property type="term" value="C:plasma membrane"/>
    <property type="evidence" value="ECO:0007669"/>
    <property type="project" value="Ensembl"/>
</dbReference>
<dbReference type="GO" id="GO:0070822">
    <property type="term" value="C:Sin3-type complex"/>
    <property type="evidence" value="ECO:0000250"/>
    <property type="project" value="UniProtKB"/>
</dbReference>
<dbReference type="GO" id="GO:0003677">
    <property type="term" value="F:DNA binding"/>
    <property type="evidence" value="ECO:0007669"/>
    <property type="project" value="Ensembl"/>
</dbReference>
<dbReference type="GO" id="GO:0035033">
    <property type="term" value="F:histone deacetylase regulator activity"/>
    <property type="evidence" value="ECO:0000304"/>
    <property type="project" value="ARUK-UCL"/>
</dbReference>
<dbReference type="GO" id="GO:0140002">
    <property type="term" value="F:histone H3K4me3 reader activity"/>
    <property type="evidence" value="ECO:0007669"/>
    <property type="project" value="Ensembl"/>
</dbReference>
<dbReference type="GO" id="GO:0140566">
    <property type="term" value="F:histone reader activity"/>
    <property type="evidence" value="ECO:0000304"/>
    <property type="project" value="ARUK-UCL"/>
</dbReference>
<dbReference type="GO" id="GO:0035091">
    <property type="term" value="F:phosphatidylinositol binding"/>
    <property type="evidence" value="ECO:0007669"/>
    <property type="project" value="Ensembl"/>
</dbReference>
<dbReference type="GO" id="GO:0044877">
    <property type="term" value="F:protein-containing complex binding"/>
    <property type="evidence" value="ECO:0007669"/>
    <property type="project" value="Ensembl"/>
</dbReference>
<dbReference type="GO" id="GO:0008270">
    <property type="term" value="F:zinc ion binding"/>
    <property type="evidence" value="ECO:0007669"/>
    <property type="project" value="UniProtKB-KW"/>
</dbReference>
<dbReference type="GO" id="GO:0030317">
    <property type="term" value="P:flagellated sperm motility"/>
    <property type="evidence" value="ECO:0000315"/>
    <property type="project" value="BHF-UCL"/>
</dbReference>
<dbReference type="GO" id="GO:0048133">
    <property type="term" value="P:male germ-line stem cell asymmetric division"/>
    <property type="evidence" value="ECO:0000315"/>
    <property type="project" value="BHF-UCL"/>
</dbReference>
<dbReference type="GO" id="GO:0007141">
    <property type="term" value="P:male meiosis I"/>
    <property type="evidence" value="ECO:0000315"/>
    <property type="project" value="BHF-UCL"/>
</dbReference>
<dbReference type="GO" id="GO:2001234">
    <property type="term" value="P:negative regulation of apoptotic signaling pathway"/>
    <property type="evidence" value="ECO:0000315"/>
    <property type="project" value="MGI"/>
</dbReference>
<dbReference type="GO" id="GO:0030336">
    <property type="term" value="P:negative regulation of cell migration"/>
    <property type="evidence" value="ECO:0000303"/>
    <property type="project" value="ComplexPortal"/>
</dbReference>
<dbReference type="GO" id="GO:0045814">
    <property type="term" value="P:negative regulation of gene expression, epigenetic"/>
    <property type="evidence" value="ECO:0000304"/>
    <property type="project" value="ARUK-UCL"/>
</dbReference>
<dbReference type="GO" id="GO:1902455">
    <property type="term" value="P:negative regulation of stem cell population maintenance"/>
    <property type="evidence" value="ECO:0000303"/>
    <property type="project" value="ComplexPortal"/>
</dbReference>
<dbReference type="GO" id="GO:0000122">
    <property type="term" value="P:negative regulation of transcription by RNA polymerase II"/>
    <property type="evidence" value="ECO:0000303"/>
    <property type="project" value="ComplexPortal"/>
</dbReference>
<dbReference type="GO" id="GO:0030512">
    <property type="term" value="P:negative regulation of transforming growth factor beta receptor signaling pathway"/>
    <property type="evidence" value="ECO:0000303"/>
    <property type="project" value="ComplexPortal"/>
</dbReference>
<dbReference type="GO" id="GO:0045893">
    <property type="term" value="P:positive regulation of DNA-templated transcription"/>
    <property type="evidence" value="ECO:0000314"/>
    <property type="project" value="MGI"/>
</dbReference>
<dbReference type="GO" id="GO:1902459">
    <property type="term" value="P:positive regulation of stem cell population maintenance"/>
    <property type="evidence" value="ECO:0000303"/>
    <property type="project" value="ComplexPortal"/>
</dbReference>
<dbReference type="GO" id="GO:0030511">
    <property type="term" value="P:positive regulation of transforming growth factor beta receptor signaling pathway"/>
    <property type="evidence" value="ECO:0007669"/>
    <property type="project" value="Ensembl"/>
</dbReference>
<dbReference type="GO" id="GO:0072520">
    <property type="term" value="P:seminiferous tubule development"/>
    <property type="evidence" value="ECO:0000315"/>
    <property type="project" value="BHF-UCL"/>
</dbReference>
<dbReference type="GO" id="GO:0007286">
    <property type="term" value="P:spermatid development"/>
    <property type="evidence" value="ECO:0000315"/>
    <property type="project" value="BHF-UCL"/>
</dbReference>
<dbReference type="GO" id="GO:0007283">
    <property type="term" value="P:spermatogenesis"/>
    <property type="evidence" value="ECO:0000315"/>
    <property type="project" value="BHF-UCL"/>
</dbReference>
<dbReference type="CDD" id="cd16861">
    <property type="entry name" value="ING_ING2"/>
    <property type="match status" value="1"/>
</dbReference>
<dbReference type="CDD" id="cd15683">
    <property type="entry name" value="PHD_ING2"/>
    <property type="match status" value="1"/>
</dbReference>
<dbReference type="FunFam" id="3.30.40.10:FF:000021">
    <property type="entry name" value="Inhibitor of growth 2b"/>
    <property type="match status" value="1"/>
</dbReference>
<dbReference type="Gene3D" id="6.10.140.1740">
    <property type="match status" value="1"/>
</dbReference>
<dbReference type="Gene3D" id="3.30.40.10">
    <property type="entry name" value="Zinc/RING finger domain, C3HC4 (zinc finger)"/>
    <property type="match status" value="1"/>
</dbReference>
<dbReference type="InterPro" id="IPR042019">
    <property type="entry name" value="ING2_PHD"/>
</dbReference>
<dbReference type="InterPro" id="IPR028651">
    <property type="entry name" value="ING_fam"/>
</dbReference>
<dbReference type="InterPro" id="IPR024610">
    <property type="entry name" value="ING_N_histone-binding"/>
</dbReference>
<dbReference type="InterPro" id="IPR019786">
    <property type="entry name" value="Zinc_finger_PHD-type_CS"/>
</dbReference>
<dbReference type="InterPro" id="IPR011011">
    <property type="entry name" value="Znf_FYVE_PHD"/>
</dbReference>
<dbReference type="InterPro" id="IPR001965">
    <property type="entry name" value="Znf_PHD"/>
</dbReference>
<dbReference type="InterPro" id="IPR019787">
    <property type="entry name" value="Znf_PHD-finger"/>
</dbReference>
<dbReference type="InterPro" id="IPR013083">
    <property type="entry name" value="Znf_RING/FYVE/PHD"/>
</dbReference>
<dbReference type="PANTHER" id="PTHR10333">
    <property type="entry name" value="INHIBITOR OF GROWTH PROTEIN"/>
    <property type="match status" value="1"/>
</dbReference>
<dbReference type="PANTHER" id="PTHR10333:SF37">
    <property type="entry name" value="INHIBITOR OF GROWTH PROTEIN 2"/>
    <property type="match status" value="1"/>
</dbReference>
<dbReference type="Pfam" id="PF12998">
    <property type="entry name" value="ING"/>
    <property type="match status" value="1"/>
</dbReference>
<dbReference type="SMART" id="SM01408">
    <property type="entry name" value="ING"/>
    <property type="match status" value="1"/>
</dbReference>
<dbReference type="SMART" id="SM00249">
    <property type="entry name" value="PHD"/>
    <property type="match status" value="1"/>
</dbReference>
<dbReference type="SUPFAM" id="SSF57903">
    <property type="entry name" value="FYVE/PHD zinc finger"/>
    <property type="match status" value="1"/>
</dbReference>
<dbReference type="PROSITE" id="PS01359">
    <property type="entry name" value="ZF_PHD_1"/>
    <property type="match status" value="1"/>
</dbReference>
<dbReference type="PROSITE" id="PS50016">
    <property type="entry name" value="ZF_PHD_2"/>
    <property type="match status" value="1"/>
</dbReference>
<organism>
    <name type="scientific">Mus musculus</name>
    <name type="common">Mouse</name>
    <dbReference type="NCBI Taxonomy" id="10090"/>
    <lineage>
        <taxon>Eukaryota</taxon>
        <taxon>Metazoa</taxon>
        <taxon>Chordata</taxon>
        <taxon>Craniata</taxon>
        <taxon>Vertebrata</taxon>
        <taxon>Euteleostomi</taxon>
        <taxon>Mammalia</taxon>
        <taxon>Eutheria</taxon>
        <taxon>Euarchontoglires</taxon>
        <taxon>Glires</taxon>
        <taxon>Rodentia</taxon>
        <taxon>Myomorpha</taxon>
        <taxon>Muroidea</taxon>
        <taxon>Muridae</taxon>
        <taxon>Murinae</taxon>
        <taxon>Mus</taxon>
        <taxon>Mus</taxon>
    </lineage>
</organism>
<gene>
    <name type="primary">Ing2</name>
    <name type="synonym">Ing1l</name>
</gene>
<sequence>MLGQQQQQQLYSSAALLTGERSRLLSCYVQDYLECVESLPHDMQRNVSVLRELDNKYQETLKEIDDVYEKYKKEDDSNQKKRLQQHLQRALINSQELGDEKIQIVTQMLELVENRARQMELHSQCFQDPAESERASDKSKMDSSQPERSSRRPRRQRTSESRDLCHMTNGIDDCDDQPPKEKRSKSAKKKKRSKAKQEREASPVEFAIDPNEPTYCLCNQVSYGEMIGCDNEQCPIEWFHFSCVSLTYKPKGKWYCPKCRGDNEKTMDKSTEKTKKERRAR</sequence>
<reference key="1">
    <citation type="submission" date="1998-07" db="EMBL/GenBank/DDBJ databases">
        <authorList>
            <person name="Nagashima M."/>
            <person name="Hagiwara K."/>
            <person name="Hancock A.R."/>
            <person name="Harris C.C."/>
        </authorList>
    </citation>
    <scope>NUCLEOTIDE SEQUENCE [MRNA]</scope>
</reference>
<reference key="2">
    <citation type="journal article" date="2005" name="Science">
        <title>The transcriptional landscape of the mammalian genome.</title>
        <authorList>
            <person name="Carninci P."/>
            <person name="Kasukawa T."/>
            <person name="Katayama S."/>
            <person name="Gough J."/>
            <person name="Frith M.C."/>
            <person name="Maeda N."/>
            <person name="Oyama R."/>
            <person name="Ravasi T."/>
            <person name="Lenhard B."/>
            <person name="Wells C."/>
            <person name="Kodzius R."/>
            <person name="Shimokawa K."/>
            <person name="Bajic V.B."/>
            <person name="Brenner S.E."/>
            <person name="Batalov S."/>
            <person name="Forrest A.R."/>
            <person name="Zavolan M."/>
            <person name="Davis M.J."/>
            <person name="Wilming L.G."/>
            <person name="Aidinis V."/>
            <person name="Allen J.E."/>
            <person name="Ambesi-Impiombato A."/>
            <person name="Apweiler R."/>
            <person name="Aturaliya R.N."/>
            <person name="Bailey T.L."/>
            <person name="Bansal M."/>
            <person name="Baxter L."/>
            <person name="Beisel K.W."/>
            <person name="Bersano T."/>
            <person name="Bono H."/>
            <person name="Chalk A.M."/>
            <person name="Chiu K.P."/>
            <person name="Choudhary V."/>
            <person name="Christoffels A."/>
            <person name="Clutterbuck D.R."/>
            <person name="Crowe M.L."/>
            <person name="Dalla E."/>
            <person name="Dalrymple B.P."/>
            <person name="de Bono B."/>
            <person name="Della Gatta G."/>
            <person name="di Bernardo D."/>
            <person name="Down T."/>
            <person name="Engstrom P."/>
            <person name="Fagiolini M."/>
            <person name="Faulkner G."/>
            <person name="Fletcher C.F."/>
            <person name="Fukushima T."/>
            <person name="Furuno M."/>
            <person name="Futaki S."/>
            <person name="Gariboldi M."/>
            <person name="Georgii-Hemming P."/>
            <person name="Gingeras T.R."/>
            <person name="Gojobori T."/>
            <person name="Green R.E."/>
            <person name="Gustincich S."/>
            <person name="Harbers M."/>
            <person name="Hayashi Y."/>
            <person name="Hensch T.K."/>
            <person name="Hirokawa N."/>
            <person name="Hill D."/>
            <person name="Huminiecki L."/>
            <person name="Iacono M."/>
            <person name="Ikeo K."/>
            <person name="Iwama A."/>
            <person name="Ishikawa T."/>
            <person name="Jakt M."/>
            <person name="Kanapin A."/>
            <person name="Katoh M."/>
            <person name="Kawasawa Y."/>
            <person name="Kelso J."/>
            <person name="Kitamura H."/>
            <person name="Kitano H."/>
            <person name="Kollias G."/>
            <person name="Krishnan S.P."/>
            <person name="Kruger A."/>
            <person name="Kummerfeld S.K."/>
            <person name="Kurochkin I.V."/>
            <person name="Lareau L.F."/>
            <person name="Lazarevic D."/>
            <person name="Lipovich L."/>
            <person name="Liu J."/>
            <person name="Liuni S."/>
            <person name="McWilliam S."/>
            <person name="Madan Babu M."/>
            <person name="Madera M."/>
            <person name="Marchionni L."/>
            <person name="Matsuda H."/>
            <person name="Matsuzawa S."/>
            <person name="Miki H."/>
            <person name="Mignone F."/>
            <person name="Miyake S."/>
            <person name="Morris K."/>
            <person name="Mottagui-Tabar S."/>
            <person name="Mulder N."/>
            <person name="Nakano N."/>
            <person name="Nakauchi H."/>
            <person name="Ng P."/>
            <person name="Nilsson R."/>
            <person name="Nishiguchi S."/>
            <person name="Nishikawa S."/>
            <person name="Nori F."/>
            <person name="Ohara O."/>
            <person name="Okazaki Y."/>
            <person name="Orlando V."/>
            <person name="Pang K.C."/>
            <person name="Pavan W.J."/>
            <person name="Pavesi G."/>
            <person name="Pesole G."/>
            <person name="Petrovsky N."/>
            <person name="Piazza S."/>
            <person name="Reed J."/>
            <person name="Reid J.F."/>
            <person name="Ring B.Z."/>
            <person name="Ringwald M."/>
            <person name="Rost B."/>
            <person name="Ruan Y."/>
            <person name="Salzberg S.L."/>
            <person name="Sandelin A."/>
            <person name="Schneider C."/>
            <person name="Schoenbach C."/>
            <person name="Sekiguchi K."/>
            <person name="Semple C.A."/>
            <person name="Seno S."/>
            <person name="Sessa L."/>
            <person name="Sheng Y."/>
            <person name="Shibata Y."/>
            <person name="Shimada H."/>
            <person name="Shimada K."/>
            <person name="Silva D."/>
            <person name="Sinclair B."/>
            <person name="Sperling S."/>
            <person name="Stupka E."/>
            <person name="Sugiura K."/>
            <person name="Sultana R."/>
            <person name="Takenaka Y."/>
            <person name="Taki K."/>
            <person name="Tammoja K."/>
            <person name="Tan S.L."/>
            <person name="Tang S."/>
            <person name="Taylor M.S."/>
            <person name="Tegner J."/>
            <person name="Teichmann S.A."/>
            <person name="Ueda H.R."/>
            <person name="van Nimwegen E."/>
            <person name="Verardo R."/>
            <person name="Wei C.L."/>
            <person name="Yagi K."/>
            <person name="Yamanishi H."/>
            <person name="Zabarovsky E."/>
            <person name="Zhu S."/>
            <person name="Zimmer A."/>
            <person name="Hide W."/>
            <person name="Bult C."/>
            <person name="Grimmond S.M."/>
            <person name="Teasdale R.D."/>
            <person name="Liu E.T."/>
            <person name="Brusic V."/>
            <person name="Quackenbush J."/>
            <person name="Wahlestedt C."/>
            <person name="Mattick J.S."/>
            <person name="Hume D.A."/>
            <person name="Kai C."/>
            <person name="Sasaki D."/>
            <person name="Tomaru Y."/>
            <person name="Fukuda S."/>
            <person name="Kanamori-Katayama M."/>
            <person name="Suzuki M."/>
            <person name="Aoki J."/>
            <person name="Arakawa T."/>
            <person name="Iida J."/>
            <person name="Imamura K."/>
            <person name="Itoh M."/>
            <person name="Kato T."/>
            <person name="Kawaji H."/>
            <person name="Kawagashira N."/>
            <person name="Kawashima T."/>
            <person name="Kojima M."/>
            <person name="Kondo S."/>
            <person name="Konno H."/>
            <person name="Nakano K."/>
            <person name="Ninomiya N."/>
            <person name="Nishio T."/>
            <person name="Okada M."/>
            <person name="Plessy C."/>
            <person name="Shibata K."/>
            <person name="Shiraki T."/>
            <person name="Suzuki S."/>
            <person name="Tagami M."/>
            <person name="Waki K."/>
            <person name="Watahiki A."/>
            <person name="Okamura-Oho Y."/>
            <person name="Suzuki H."/>
            <person name="Kawai J."/>
            <person name="Hayashizaki Y."/>
        </authorList>
    </citation>
    <scope>NUCLEOTIDE SEQUENCE [LARGE SCALE MRNA]</scope>
    <source>
        <strain>C57BL/6J</strain>
        <tissue>Cerebellum</tissue>
        <tissue>Hippocampus</tissue>
    </source>
</reference>
<reference key="3">
    <citation type="journal article" date="2009" name="PLoS Biol.">
        <title>Lineage-specific biology revealed by a finished genome assembly of the mouse.</title>
        <authorList>
            <person name="Church D.M."/>
            <person name="Goodstadt L."/>
            <person name="Hillier L.W."/>
            <person name="Zody M.C."/>
            <person name="Goldstein S."/>
            <person name="She X."/>
            <person name="Bult C.J."/>
            <person name="Agarwala R."/>
            <person name="Cherry J.L."/>
            <person name="DiCuccio M."/>
            <person name="Hlavina W."/>
            <person name="Kapustin Y."/>
            <person name="Meric P."/>
            <person name="Maglott D."/>
            <person name="Birtle Z."/>
            <person name="Marques A.C."/>
            <person name="Graves T."/>
            <person name="Zhou S."/>
            <person name="Teague B."/>
            <person name="Potamousis K."/>
            <person name="Churas C."/>
            <person name="Place M."/>
            <person name="Herschleb J."/>
            <person name="Runnheim R."/>
            <person name="Forrest D."/>
            <person name="Amos-Landgraf J."/>
            <person name="Schwartz D.C."/>
            <person name="Cheng Z."/>
            <person name="Lindblad-Toh K."/>
            <person name="Eichler E.E."/>
            <person name="Ponting C.P."/>
        </authorList>
    </citation>
    <scope>NUCLEOTIDE SEQUENCE [LARGE SCALE GENOMIC DNA]</scope>
    <source>
        <strain>C57BL/6J</strain>
    </source>
</reference>
<reference key="4">
    <citation type="submission" date="2005-07" db="EMBL/GenBank/DDBJ databases">
        <authorList>
            <person name="Mural R.J."/>
            <person name="Adams M.D."/>
            <person name="Myers E.W."/>
            <person name="Smith H.O."/>
            <person name="Venter J.C."/>
        </authorList>
    </citation>
    <scope>NUCLEOTIDE SEQUENCE [LARGE SCALE GENOMIC DNA]</scope>
</reference>
<reference key="5">
    <citation type="journal article" date="2004" name="Genome Res.">
        <title>The status, quality, and expansion of the NIH full-length cDNA project: the Mammalian Gene Collection (MGC).</title>
        <authorList>
            <consortium name="The MGC Project Team"/>
        </authorList>
    </citation>
    <scope>NUCLEOTIDE SEQUENCE [LARGE SCALE MRNA]</scope>
    <source>
        <strain>FVB/N-3</strain>
        <tissue>Brain</tissue>
        <tissue>Mammary gland</tissue>
        <tissue>Olfactory epithelium</tissue>
    </source>
</reference>
<reference key="6">
    <citation type="submission" date="2004-11" db="PDB data bank">
        <title>Solution structure of PHD domain of inhibitor of growth family, member 1-like.</title>
        <authorList>
            <consortium name="RIKEN structural genomics initiative (RSGI)"/>
        </authorList>
    </citation>
    <scope>STRUCTURE BY NMR OF 205-262</scope>
</reference>
<feature type="chain" id="PRO_0000212664" description="Inhibitor of growth protein 2">
    <location>
        <begin position="1"/>
        <end position="281"/>
    </location>
</feature>
<feature type="zinc finger region" description="PHD-type" evidence="5">
    <location>
        <begin position="213"/>
        <end position="262"/>
    </location>
</feature>
<feature type="region of interest" description="Disordered" evidence="6">
    <location>
        <begin position="123"/>
        <end position="204"/>
    </location>
</feature>
<feature type="region of interest" description="Disordered" evidence="6">
    <location>
        <begin position="261"/>
        <end position="281"/>
    </location>
</feature>
<feature type="region of interest" description="PBR" evidence="2">
    <location>
        <begin position="265"/>
        <end position="281"/>
    </location>
</feature>
<feature type="coiled-coil region" evidence="4">
    <location>
        <begin position="49"/>
        <end position="101"/>
    </location>
</feature>
<feature type="compositionally biased region" description="Basic and acidic residues" evidence="6">
    <location>
        <begin position="131"/>
        <end position="141"/>
    </location>
</feature>
<feature type="compositionally biased region" description="Basic residues" evidence="6">
    <location>
        <begin position="182"/>
        <end position="194"/>
    </location>
</feature>
<feature type="compositionally biased region" description="Basic and acidic residues" evidence="6">
    <location>
        <begin position="261"/>
        <end position="275"/>
    </location>
</feature>
<feature type="binding site" evidence="3">
    <location>
        <position position="216"/>
    </location>
    <ligand>
        <name>Zn(2+)</name>
        <dbReference type="ChEBI" id="CHEBI:29105"/>
        <label>1</label>
    </ligand>
</feature>
<feature type="binding site" evidence="3">
    <location>
        <position position="218"/>
    </location>
    <ligand>
        <name>Zn(2+)</name>
        <dbReference type="ChEBI" id="CHEBI:29105"/>
        <label>1</label>
    </ligand>
</feature>
<feature type="binding site" evidence="3">
    <location>
        <position position="229"/>
    </location>
    <ligand>
        <name>Zn(2+)</name>
        <dbReference type="ChEBI" id="CHEBI:29105"/>
        <label>2</label>
    </ligand>
</feature>
<feature type="binding site" evidence="3">
    <location>
        <position position="234"/>
    </location>
    <ligand>
        <name>Zn(2+)</name>
        <dbReference type="ChEBI" id="CHEBI:29105"/>
        <label>2</label>
    </ligand>
</feature>
<feature type="binding site" evidence="3">
    <location>
        <position position="240"/>
    </location>
    <ligand>
        <name>Zn(2+)</name>
        <dbReference type="ChEBI" id="CHEBI:29105"/>
        <label>1</label>
    </ligand>
</feature>
<feature type="binding site" evidence="3">
    <location>
        <position position="243"/>
    </location>
    <ligand>
        <name>Zn(2+)</name>
        <dbReference type="ChEBI" id="CHEBI:29105"/>
        <label>1</label>
    </ligand>
</feature>
<feature type="binding site" evidence="3">
    <location>
        <position position="256"/>
    </location>
    <ligand>
        <name>Zn(2+)</name>
        <dbReference type="ChEBI" id="CHEBI:29105"/>
        <label>2</label>
    </ligand>
</feature>
<feature type="binding site" evidence="3">
    <location>
        <position position="259"/>
    </location>
    <ligand>
        <name>Zn(2+)</name>
        <dbReference type="ChEBI" id="CHEBI:29105"/>
        <label>2</label>
    </ligand>
</feature>
<feature type="site" description="Histone H3K4me3 binding" evidence="3">
    <location>
        <position position="215"/>
    </location>
</feature>
<feature type="site" description="Histone H3K4me3 binding" evidence="3">
    <location>
        <position position="226"/>
    </location>
</feature>
<feature type="site" description="Histone H3K4me3 binding" evidence="3">
    <location>
        <position position="230"/>
    </location>
</feature>
<feature type="site" description="Histone H3K4me3 binding" evidence="3">
    <location>
        <position position="238"/>
    </location>
</feature>
<feature type="cross-link" description="Glycyl lysine isopeptide (Lys-Gly) (interchain with G-Cter in SUMO1)" evidence="2">
    <location>
        <position position="196"/>
    </location>
</feature>
<feature type="sequence conflict" description="In Ref. 1; AAG12173 and 5; AAH50003." evidence="7" ref="1 5">
    <original>S</original>
    <variation>T</variation>
    <location>
        <position position="26"/>
    </location>
</feature>
<feature type="sequence conflict" description="In Ref. 1; AAG12173." evidence="7" ref="1">
    <original>K</original>
    <variation>E</variation>
    <location>
        <position position="72"/>
    </location>
</feature>
<feature type="sequence conflict" description="In Ref. 1; AAG12173." evidence="7" ref="1">
    <original>I</original>
    <variation>N</variation>
    <location>
        <position position="104"/>
    </location>
</feature>
<feature type="sequence conflict" description="In Ref. 1; AAG12173." evidence="7" ref="1">
    <original>E</original>
    <variation>G</variation>
    <location>
        <position position="110"/>
    </location>
</feature>
<feature type="sequence conflict" description="In Ref. 1; AAG12173." evidence="7" ref="1">
    <original>A</original>
    <variation>S</variation>
    <location>
        <position position="116"/>
    </location>
</feature>
<feature type="sequence conflict" description="In Ref. 1; AAG12173." evidence="7" ref="1">
    <original>P</original>
    <variation>S</variation>
    <location>
        <position position="203"/>
    </location>
</feature>
<feature type="sequence conflict" description="In Ref. 1; AAG12173." evidence="7" ref="1">
    <original>P</original>
    <variation>H</variation>
    <location>
        <position position="250"/>
    </location>
</feature>
<feature type="strand" evidence="8">
    <location>
        <begin position="210"/>
        <end position="212"/>
    </location>
</feature>
<feature type="turn" evidence="9">
    <location>
        <begin position="216"/>
        <end position="219"/>
    </location>
</feature>
<feature type="strand" evidence="9">
    <location>
        <begin position="224"/>
        <end position="228"/>
    </location>
</feature>
<feature type="strand" evidence="9">
    <location>
        <begin position="238"/>
        <end position="240"/>
    </location>
</feature>
<feature type="helix" evidence="9">
    <location>
        <begin position="242"/>
        <end position="244"/>
    </location>
</feature>
<feature type="helix" evidence="9">
    <location>
        <begin position="257"/>
        <end position="260"/>
    </location>
</feature>
<name>ING2_MOUSE</name>
<proteinExistence type="evidence at protein level"/>
<keyword id="KW-0002">3D-structure</keyword>
<keyword id="KW-0156">Chromatin regulator</keyword>
<keyword id="KW-0175">Coiled coil</keyword>
<keyword id="KW-0341">Growth regulation</keyword>
<keyword id="KW-1017">Isopeptide bond</keyword>
<keyword id="KW-0479">Metal-binding</keyword>
<keyword id="KW-0539">Nucleus</keyword>
<keyword id="KW-1185">Reference proteome</keyword>
<keyword id="KW-0804">Transcription</keyword>
<keyword id="KW-0805">Transcription regulation</keyword>
<keyword id="KW-0832">Ubl conjugation</keyword>
<keyword id="KW-0862">Zinc</keyword>
<keyword id="KW-0863">Zinc-finger</keyword>
<protein>
    <recommendedName>
        <fullName>Inhibitor of growth protein 2</fullName>
    </recommendedName>
    <alternativeName>
        <fullName>Inhibitor of growth 1-like protein</fullName>
    </alternativeName>
    <alternativeName>
        <fullName>p33ING2</fullName>
    </alternativeName>
</protein>
<evidence type="ECO:0000250" key="1"/>
<evidence type="ECO:0000250" key="2">
    <source>
        <dbReference type="UniProtKB" id="Q9H160"/>
    </source>
</evidence>
<evidence type="ECO:0000250" key="3">
    <source>
        <dbReference type="UniProtKB" id="Q9UK53"/>
    </source>
</evidence>
<evidence type="ECO:0000255" key="4"/>
<evidence type="ECO:0000255" key="5">
    <source>
        <dbReference type="PROSITE-ProRule" id="PRU00146"/>
    </source>
</evidence>
<evidence type="ECO:0000256" key="6">
    <source>
        <dbReference type="SAM" id="MobiDB-lite"/>
    </source>
</evidence>
<evidence type="ECO:0000305" key="7"/>
<evidence type="ECO:0007829" key="8">
    <source>
        <dbReference type="PDB" id="1WES"/>
    </source>
</evidence>
<evidence type="ECO:0007829" key="9">
    <source>
        <dbReference type="PDB" id="2G6Q"/>
    </source>
</evidence>
<accession>Q9ESK4</accession>
<accession>Q4VAD7</accession>
<accession>Q80VI5</accession>
<accession>Q8BGU8</accession>
<comment type="function">
    <text evidence="1">Seems to be involved in p53/TP53 activation and p53/TP53-dependent apoptotic pathways, probably by enhancing acetylation of p53/TP53. Component of a mSin3A-like corepressor complex, which is probably involved in deacetylation of nucleosomal histones. ING2 activity seems to be modulated by binding to phosphoinositides (PtdInsPs) (By similarity).</text>
</comment>
<comment type="subunit">
    <text evidence="1">Interacts with H3K4me3 and to a lesser extent with H3K4me2. Component of a mSin3A-like complex at least consisting of SIN3A, HDAC1, HDAC2, RBBP4/RbAp48, RBBP7/RbAp46, SAP30 and ING2.</text>
</comment>
<comment type="subcellular location">
    <subcellularLocation>
        <location evidence="1">Nucleus</location>
    </subcellularLocation>
    <text evidence="1">Predominantly cytoplasmic. Localized to chromatin and nuclear matrix. Upon reduced PtdIns(5)P levels seems to be released from chromatin and, at least partially, translocated to the cytoplasm (By similarity).</text>
</comment>
<comment type="domain">
    <text evidence="1">The PHD-type zinc finger mediates the binding to H3K4me3.</text>
</comment>
<comment type="domain">
    <text evidence="1">The polybasic region (PBR) is responsive to the binding to phosphoinositides (PtdInsPs), including phosphatidylinositol 5-phosphate (PtdIns(5)P).</text>
</comment>
<comment type="PTM">
    <text evidence="1">Sumoylation enhances its association with SIN3A and is required for binding to some target gene promoters, this is the case for TMEM71.</text>
</comment>
<comment type="similarity">
    <text evidence="7">Belongs to the ING family.</text>
</comment>
<comment type="sequence caution" evidence="7">
    <conflict type="miscellaneous discrepancy">
        <sequence resource="EMBL-CDS" id="AAH50003"/>
    </conflict>
    <text>Contaminating sequence. Potential poly-A sequence.</text>
</comment>